<keyword id="KW-0025">Alternative splicing</keyword>
<keyword id="KW-1262">Eukaryotic host gene expression shutoff by virus</keyword>
<keyword id="KW-1035">Host cytoplasm</keyword>
<keyword id="KW-1190">Host gene expression shutoff by virus</keyword>
<keyword id="KW-1192">Host mRNA suppression by virus</keyword>
<keyword id="KW-1048">Host nucleus</keyword>
<keyword id="KW-0945">Host-virus interaction</keyword>
<keyword id="KW-1090">Inhibition of host innate immune response by virus</keyword>
<keyword id="KW-1114">Inhibition of host interferon signaling pathway by virus</keyword>
<keyword id="KW-1102">Inhibition of host PKR by virus</keyword>
<keyword id="KW-1103">Inhibition of host pre-mRNA processing by virus</keyword>
<keyword id="KW-1088">Inhibition of host RIG-I by virus</keyword>
<keyword id="KW-1113">Inhibition of host RLR pathway by virus</keyword>
<keyword id="KW-0922">Interferon antiviral system evasion</keyword>
<keyword id="KW-0694">RNA-binding</keyword>
<keyword id="KW-0832">Ubl conjugation</keyword>
<keyword id="KW-0899">Viral immunoevasion</keyword>
<proteinExistence type="inferred from homology"/>
<evidence type="ECO:0000255" key="1">
    <source>
        <dbReference type="HAMAP-Rule" id="MF_04066"/>
    </source>
</evidence>
<evidence type="ECO:0000256" key="2">
    <source>
        <dbReference type="SAM" id="MobiDB-lite"/>
    </source>
</evidence>
<reference key="1">
    <citation type="journal article" date="2004" name="Nature">
        <title>Genesis of a highly pathogenic and potentially pandemic H5N1 influenza virus in eastern Asia.</title>
        <authorList>
            <person name="Li K.S."/>
            <person name="Guan Y."/>
            <person name="Wang J."/>
            <person name="Smith G.J.D."/>
            <person name="Xu K.M."/>
            <person name="Duan L."/>
            <person name="Rahardjo A.P."/>
            <person name="Puthavathana P."/>
            <person name="Buranathai C."/>
            <person name="Nguyen T.D."/>
            <person name="Estoepangestie A.T.S."/>
            <person name="Chaisingh A."/>
            <person name="Auewarakul P."/>
            <person name="Long H.T."/>
            <person name="Hanh N.T.H."/>
            <person name="Webby R.J."/>
            <person name="Poon L.L.M."/>
            <person name="Chen H."/>
            <person name="Shortridge K.F."/>
            <person name="Yuen K.Y."/>
            <person name="Webster R.G."/>
            <person name="Peiris J.S.M."/>
        </authorList>
    </citation>
    <scope>NUCLEOTIDE SEQUENCE [GENOMIC RNA]</scope>
</reference>
<protein>
    <recommendedName>
        <fullName evidence="1">Non-structural protein 1</fullName>
        <shortName evidence="1">NS1</shortName>
    </recommendedName>
    <alternativeName>
        <fullName evidence="1">NS1A</fullName>
    </alternativeName>
</protein>
<comment type="function">
    <text evidence="1">Inhibits post-transcriptional processing of cellular pre-mRNA, by binding and inhibiting two cellular proteins that are required for the 3'-end processing of cellular pre-mRNAs: the 30 kDa cleavage and polyadenylation specificity factor/CPSF4 and the poly(A)-binding protein 2/PABPN1. In turn, unprocessed 3' end pre-mRNAs accumulate in the host nucleus and are no longer exported to the cytoplasm. Cellular protein synthesis is thereby shut off very early after virus infection. Viral protein synthesis is not affected by the inhibition of the cellular 3' end processing machinery because the poly(A) tails of viral mRNAs are produced by the viral polymerase through a stuttering mechanism. Prevents the establishment of the cellular antiviral state by inhibiting TRIM25-mediated RIGI ubiquitination, which normally triggers the antiviral transduction signal that leads to the activation of type I IFN genes by transcription factors IRF3 and IRF7. Also binds poly(A) and U6 snRNA. Inhibits the integrated stress response (ISR) in the infected cell by blocking dsRNA binding by EIF2AK2/PKR and further phosphorylation of EIF2S1/EIF-2ALPHA. Stress granule formation is thus inhibited, which allows protein synthesis and viral replication.</text>
</comment>
<comment type="subunit">
    <text evidence="1">Homodimer. Interacts with host TRIM25 (via coiled coil); this interaction specifically inhibits TRIM25 multimerization and TRIM25-mediated RIGI CARD ubiquitination. Interacts with human EIF2AK2/PKR, CPSF4, IVNS1ABP and PABPN1.</text>
</comment>
<comment type="subcellular location">
    <subcellularLocation>
        <location evidence="1">Host nucleus</location>
    </subcellularLocation>
    <subcellularLocation>
        <location evidence="1">Host cytoplasm</location>
    </subcellularLocation>
    <text evidence="1">In uninfected, transfected cells, NS1 is localized in the nucleus. Only in virus infected cells, the nuclear export signal is unveiled, presumably by a viral protein, and a fraction of NS1 is exported in the cytoplasm.</text>
</comment>
<comment type="alternative products">
    <event type="alternative splicing"/>
    <isoform>
        <id>Q6DP62-1</id>
        <name>NS1</name>
        <sequence type="displayed"/>
    </isoform>
    <isoform>
        <id>Q6DP63-1</id>
        <name>NEP</name>
        <name>NS2</name>
        <sequence type="external"/>
    </isoform>
</comment>
<comment type="domain">
    <text evidence="1">The dsRNA-binding region is required for suppression of RNA silencing.</text>
</comment>
<comment type="PTM">
    <text evidence="1">Upon interferon induction, ISGylated via host HERC5; this results in the impairment of NS1 interaction with RNA targets due to its inability to form homodimers and to interact with host EIF2AK2/PKR.</text>
</comment>
<comment type="similarity">
    <text evidence="1">Belongs to the influenza A viruses NS1 family.</text>
</comment>
<name>NS1_I02A6</name>
<dbReference type="EMBL" id="AY651568">
    <property type="protein sequence ID" value="AAT73425.1"/>
    <property type="molecule type" value="Genomic_RNA"/>
</dbReference>
<dbReference type="SMR" id="Q6DP62"/>
<dbReference type="GO" id="GO:0030430">
    <property type="term" value="C:host cell cytoplasm"/>
    <property type="evidence" value="ECO:0007669"/>
    <property type="project" value="UniProtKB-SubCell"/>
</dbReference>
<dbReference type="GO" id="GO:0042025">
    <property type="term" value="C:host cell nucleus"/>
    <property type="evidence" value="ECO:0007669"/>
    <property type="project" value="UniProtKB-SubCell"/>
</dbReference>
<dbReference type="GO" id="GO:0030291">
    <property type="term" value="F:protein serine/threonine kinase inhibitor activity"/>
    <property type="evidence" value="ECO:0007669"/>
    <property type="project" value="UniProtKB-KW"/>
</dbReference>
<dbReference type="GO" id="GO:0003723">
    <property type="term" value="F:RNA binding"/>
    <property type="evidence" value="ECO:0007669"/>
    <property type="project" value="UniProtKB-KW"/>
</dbReference>
<dbReference type="GO" id="GO:0039540">
    <property type="term" value="P:symbiont-mediated suppression of host cytoplasmic pattern recognition receptor signaling pathway via inhibition of RIG-I activity"/>
    <property type="evidence" value="ECO:0007669"/>
    <property type="project" value="UniProtKB-KW"/>
</dbReference>
<dbReference type="GO" id="GO:0039657">
    <property type="term" value="P:symbiont-mediated suppression of host gene expression"/>
    <property type="evidence" value="ECO:0007669"/>
    <property type="project" value="UniProtKB-KW"/>
</dbReference>
<dbReference type="GO" id="GO:0039524">
    <property type="term" value="P:symbiont-mediated suppression of host mRNA processing"/>
    <property type="evidence" value="ECO:0007669"/>
    <property type="project" value="UniProtKB-KW"/>
</dbReference>
<dbReference type="GO" id="GO:0039580">
    <property type="term" value="P:symbiont-mediated suppression of host PKR/eIFalpha signaling"/>
    <property type="evidence" value="ECO:0007669"/>
    <property type="project" value="UniProtKB-KW"/>
</dbReference>
<dbReference type="GO" id="GO:0039502">
    <property type="term" value="P:symbiont-mediated suppression of host type I interferon-mediated signaling pathway"/>
    <property type="evidence" value="ECO:0007669"/>
    <property type="project" value="UniProtKB-KW"/>
</dbReference>
<dbReference type="FunFam" id="1.10.287.10:FF:000001">
    <property type="entry name" value="Non-structural protein 1"/>
    <property type="match status" value="1"/>
</dbReference>
<dbReference type="FunFam" id="3.30.420.330:FF:000001">
    <property type="entry name" value="Non-structural protein 1"/>
    <property type="match status" value="1"/>
</dbReference>
<dbReference type="Gene3D" id="3.30.420.330">
    <property type="entry name" value="Influenza virus non-structural protein, effector domain"/>
    <property type="match status" value="1"/>
</dbReference>
<dbReference type="Gene3D" id="1.10.287.10">
    <property type="entry name" value="S15/NS1, RNA-binding"/>
    <property type="match status" value="1"/>
</dbReference>
<dbReference type="HAMAP" id="MF_04066">
    <property type="entry name" value="INFV_NS1"/>
    <property type="match status" value="1"/>
</dbReference>
<dbReference type="InterPro" id="IPR004208">
    <property type="entry name" value="NS1"/>
</dbReference>
<dbReference type="InterPro" id="IPR000256">
    <property type="entry name" value="NS1A"/>
</dbReference>
<dbReference type="InterPro" id="IPR038064">
    <property type="entry name" value="NS1A_effect_dom-like_sf"/>
</dbReference>
<dbReference type="InterPro" id="IPR009068">
    <property type="entry name" value="uS15_NS1_RNA-bd_sf"/>
</dbReference>
<dbReference type="Pfam" id="PF00600">
    <property type="entry name" value="Flu_NS1"/>
    <property type="match status" value="1"/>
</dbReference>
<dbReference type="SUPFAM" id="SSF143021">
    <property type="entry name" value="Ns1 effector domain-like"/>
    <property type="match status" value="1"/>
</dbReference>
<dbReference type="SUPFAM" id="SSF47060">
    <property type="entry name" value="S15/NS1 RNA-binding domain"/>
    <property type="match status" value="1"/>
</dbReference>
<organismHost>
    <name type="scientific">Aves</name>
    <dbReference type="NCBI Taxonomy" id="8782"/>
</organismHost>
<organismHost>
    <name type="scientific">Felis catus</name>
    <name type="common">Cat</name>
    <name type="synonym">Felis silvestris catus</name>
    <dbReference type="NCBI Taxonomy" id="9685"/>
</organismHost>
<organismHost>
    <name type="scientific">Homo sapiens</name>
    <name type="common">Human</name>
    <dbReference type="NCBI Taxonomy" id="9606"/>
</organismHost>
<organismHost>
    <name type="scientific">Panthera pardus</name>
    <name type="common">Leopard</name>
    <name type="synonym">Felis pardus</name>
    <dbReference type="NCBI Taxonomy" id="9691"/>
</organismHost>
<organismHost>
    <name type="scientific">Panthera tigris</name>
    <name type="common">Tiger</name>
    <dbReference type="NCBI Taxonomy" id="9694"/>
</organismHost>
<organismHost>
    <name type="scientific">Sus scrofa</name>
    <name type="common">Pig</name>
    <dbReference type="NCBI Taxonomy" id="9823"/>
</organismHost>
<gene>
    <name evidence="1" type="primary">NS</name>
</gene>
<sequence>MDSNTVSSFQVDCFLWHVRKRFADQELGDAPFLDRLRRDQKSLRGRGNTLGLDIETATRAGKQIVERILEEESDEALKMPASRYLTDMTLEEMSRDWFMLMPKQKVAGSLCIKMDQAIMDKTIILKANFSVIFDRLETLILLRAFTEEGAIVGEISPLPSLPGHTDEDVKNAIGVLIGGLEWNDNTVRVSETIQRFAWRSSDEDGRLPLPPNQKRKMARTIESKV</sequence>
<feature type="chain" id="PRO_0000311752" description="Non-structural protein 1">
    <location>
        <begin position="1"/>
        <end position="225"/>
    </location>
</feature>
<feature type="region of interest" description="RNA-binding and homodimerization" evidence="1">
    <location>
        <begin position="1"/>
        <end position="73"/>
    </location>
</feature>
<feature type="region of interest" description="CPSF4-binding" evidence="1">
    <location>
        <begin position="175"/>
        <end position="210"/>
    </location>
</feature>
<feature type="region of interest" description="Disordered" evidence="2">
    <location>
        <begin position="204"/>
        <end position="225"/>
    </location>
</feature>
<feature type="region of interest" description="PABPN1-binding" evidence="1">
    <location>
        <begin position="218"/>
        <end position="225"/>
    </location>
</feature>
<feature type="short sequence motif" description="Nuclear localization signal" evidence="1">
    <location>
        <begin position="34"/>
        <end position="38"/>
    </location>
</feature>
<feature type="short sequence motif" description="Nuclear export signal" evidence="1">
    <location>
        <begin position="132"/>
        <end position="141"/>
    </location>
</feature>
<accession>Q6DP62</accession>
<organism>
    <name type="scientific">Influenza A virus (strain A/Chicken/Hong Kong/YU22/2002 H5N1 genotype Z)</name>
    <dbReference type="NCBI Taxonomy" id="284177"/>
    <lineage>
        <taxon>Viruses</taxon>
        <taxon>Riboviria</taxon>
        <taxon>Orthornavirae</taxon>
        <taxon>Negarnaviricota</taxon>
        <taxon>Polyploviricotina</taxon>
        <taxon>Insthoviricetes</taxon>
        <taxon>Articulavirales</taxon>
        <taxon>Orthomyxoviridae</taxon>
        <taxon>Alphainfluenzavirus</taxon>
        <taxon>Alphainfluenzavirus influenzae</taxon>
        <taxon>Influenza A virus</taxon>
    </lineage>
</organism>